<organism>
    <name type="scientific">Campylobacter jejuni subsp. jejuni serotype O:6 (strain 81116 / NCTC 11828)</name>
    <dbReference type="NCBI Taxonomy" id="407148"/>
    <lineage>
        <taxon>Bacteria</taxon>
        <taxon>Pseudomonadati</taxon>
        <taxon>Campylobacterota</taxon>
        <taxon>Epsilonproteobacteria</taxon>
        <taxon>Campylobacterales</taxon>
        <taxon>Campylobacteraceae</taxon>
        <taxon>Campylobacter</taxon>
    </lineage>
</organism>
<gene>
    <name evidence="1" type="primary">csrA</name>
    <name type="ordered locus">C8J_1044</name>
</gene>
<sequence>MLILSRKENESIIIGEGIEIKVVQTGKGYAKIGIEAPKSLMILRKELVQQVKDENLHSVVQNDIKLDDLSKKLIK</sequence>
<dbReference type="EMBL" id="CP000814">
    <property type="protein sequence ID" value="ABV52643.1"/>
    <property type="molecule type" value="Genomic_DNA"/>
</dbReference>
<dbReference type="RefSeq" id="WP_002852854.1">
    <property type="nucleotide sequence ID" value="NC_009839.1"/>
</dbReference>
<dbReference type="SMR" id="P0DPD4"/>
<dbReference type="KEGG" id="cju:C8J_1044"/>
<dbReference type="HOGENOM" id="CLU_164837_0_2_7"/>
<dbReference type="GO" id="GO:0005829">
    <property type="term" value="C:cytosol"/>
    <property type="evidence" value="ECO:0007669"/>
    <property type="project" value="TreeGrafter"/>
</dbReference>
<dbReference type="GO" id="GO:0048027">
    <property type="term" value="F:mRNA 5'-UTR binding"/>
    <property type="evidence" value="ECO:0007669"/>
    <property type="project" value="UniProtKB-UniRule"/>
</dbReference>
<dbReference type="GO" id="GO:0044781">
    <property type="term" value="P:bacterial-type flagellum organization"/>
    <property type="evidence" value="ECO:0007669"/>
    <property type="project" value="UniProtKB-KW"/>
</dbReference>
<dbReference type="GO" id="GO:0006402">
    <property type="term" value="P:mRNA catabolic process"/>
    <property type="evidence" value="ECO:0007669"/>
    <property type="project" value="InterPro"/>
</dbReference>
<dbReference type="GO" id="GO:0045947">
    <property type="term" value="P:negative regulation of translational initiation"/>
    <property type="evidence" value="ECO:0007669"/>
    <property type="project" value="UniProtKB-UniRule"/>
</dbReference>
<dbReference type="GO" id="GO:1902208">
    <property type="term" value="P:regulation of bacterial-type flagellum assembly"/>
    <property type="evidence" value="ECO:0007669"/>
    <property type="project" value="UniProtKB-UniRule"/>
</dbReference>
<dbReference type="GO" id="GO:0006109">
    <property type="term" value="P:regulation of carbohydrate metabolic process"/>
    <property type="evidence" value="ECO:0007669"/>
    <property type="project" value="InterPro"/>
</dbReference>
<dbReference type="Gene3D" id="2.60.40.4380">
    <property type="entry name" value="Translational regulator CsrA"/>
    <property type="match status" value="1"/>
</dbReference>
<dbReference type="HAMAP" id="MF_00167">
    <property type="entry name" value="CsrA"/>
    <property type="match status" value="1"/>
</dbReference>
<dbReference type="InterPro" id="IPR003751">
    <property type="entry name" value="CsrA"/>
</dbReference>
<dbReference type="InterPro" id="IPR036107">
    <property type="entry name" value="CsrA_sf"/>
</dbReference>
<dbReference type="NCBIfam" id="TIGR00202">
    <property type="entry name" value="csrA"/>
    <property type="match status" value="1"/>
</dbReference>
<dbReference type="PANTHER" id="PTHR34984">
    <property type="entry name" value="CARBON STORAGE REGULATOR"/>
    <property type="match status" value="1"/>
</dbReference>
<dbReference type="PANTHER" id="PTHR34984:SF1">
    <property type="entry name" value="CARBON STORAGE REGULATOR"/>
    <property type="match status" value="1"/>
</dbReference>
<dbReference type="Pfam" id="PF02599">
    <property type="entry name" value="CsrA"/>
    <property type="match status" value="1"/>
</dbReference>
<dbReference type="SUPFAM" id="SSF117130">
    <property type="entry name" value="CsrA-like"/>
    <property type="match status" value="1"/>
</dbReference>
<comment type="function">
    <text evidence="2 3">A translational regulator that binds mRNA to regulate translation initiation and/or mRNA stability. Usually binds in the 5'-UTR at or near the Shine-Dalgarno sequence preventing ribosome-binding, thus repressing translation. Its function is probably anatagonized by FliW. Inhibits translation of flaA mRNA in vitro (PubMed:27353476). Involved in post-transcriptional regulation of flagellin biosynthesis (PubMed:27353476).</text>
</comment>
<comment type="subunit">
    <text evidence="1 2">Homodimer; the beta-strands of each monomer intercalate to form a hydrophobic core, while the alpha-helices form wings that extend away from the core (By similarity). Interacts with FliW (PubMed:27353476).</text>
</comment>
<comment type="subcellular location">
    <subcellularLocation>
        <location evidence="1">Cytoplasm</location>
    </subcellularLocation>
</comment>
<comment type="disruption phenotype">
    <text evidence="2">Increased levels of flagellins FlaA and FlaB (PubMed:27353476). In double csrA-fliW deletions flagellin levels are slightly lower than wild-type (PubMed:27353476).</text>
</comment>
<comment type="similarity">
    <text evidence="1">Belongs to the CsrA/RsmA family.</text>
</comment>
<keyword id="KW-1005">Bacterial flagellum biogenesis</keyword>
<keyword id="KW-0963">Cytoplasm</keyword>
<keyword id="KW-0678">Repressor</keyword>
<keyword id="KW-0694">RNA-binding</keyword>
<keyword id="KW-0810">Translation regulation</keyword>
<reference key="1">
    <citation type="journal article" date="2007" name="J. Bacteriol.">
        <title>The complete genome sequence of Campylobacter jejuni strain 81116 (NCTC11828).</title>
        <authorList>
            <person name="Pearson B.M."/>
            <person name="Gaskin D.J.H."/>
            <person name="Segers R.P.A.M."/>
            <person name="Wells J.M."/>
            <person name="Nuijten P.J.M."/>
            <person name="van Vliet A.H.M."/>
        </authorList>
    </citation>
    <scope>NUCLEOTIDE SEQUENCE [LARGE SCALE GENOMIC DNA]</scope>
    <source>
        <strain>81116 / NCTC 11828</strain>
    </source>
</reference>
<reference key="2">
    <citation type="journal article" date="2016" name="Mol. Microbiol.">
        <title>Feedback control of Campylobacter jejuni flagellin levels through reciprocal binding of FliW to flagellin and the global regulator CsrA.</title>
        <authorList>
            <person name="Radomska K.A."/>
            <person name="Ordonez S.R."/>
            <person name="Woesten M.M."/>
            <person name="Wagenaar J.A."/>
            <person name="van Putten J.P."/>
        </authorList>
    </citation>
    <scope>FUNCTION</scope>
    <scope>INTERACTION WITH FLIW</scope>
    <scope>SUBUNIT</scope>
    <scope>DISRUPTION PHENOTYPE</scope>
    <source>
        <strain>81116 / NCTC 11828</strain>
    </source>
</reference>
<protein>
    <recommendedName>
        <fullName evidence="1">Translational regulator CsrA</fullName>
    </recommendedName>
</protein>
<evidence type="ECO:0000255" key="1">
    <source>
        <dbReference type="HAMAP-Rule" id="MF_00167"/>
    </source>
</evidence>
<evidence type="ECO:0000269" key="2">
    <source>
    </source>
</evidence>
<evidence type="ECO:0000305" key="3">
    <source>
    </source>
</evidence>
<accession>P0DPD4</accession>
<feature type="chain" id="PRO_0000442734" description="Translational regulator CsrA">
    <location>
        <begin position="1"/>
        <end position="75"/>
    </location>
</feature>
<proteinExistence type="evidence at protein level"/>
<name>CSRA_CAMJ8</name>